<evidence type="ECO:0000269" key="1">
    <source>
    </source>
</evidence>
<evidence type="ECO:0000269" key="2">
    <source>
    </source>
</evidence>
<evidence type="ECO:0000305" key="3"/>
<evidence type="ECO:0000305" key="4">
    <source>
    </source>
</evidence>
<evidence type="ECO:0000312" key="5">
    <source>
        <dbReference type="EMBL" id="ABI83732.1"/>
    </source>
</evidence>
<evidence type="ECO:0000312" key="6">
    <source>
        <dbReference type="Proteomes" id="UP000001940"/>
    </source>
</evidence>
<evidence type="ECO:0000312" key="7">
    <source>
        <dbReference type="WormBase" id="F53B2.3"/>
    </source>
</evidence>
<dbReference type="EMBL" id="DQ907008">
    <property type="protein sequence ID" value="ABI83732.1"/>
    <property type="molecule type" value="mRNA"/>
</dbReference>
<dbReference type="EMBL" id="BX284604">
    <property type="protein sequence ID" value="CAA98128.1"/>
    <property type="molecule type" value="Genomic_DNA"/>
</dbReference>
<dbReference type="PIR" id="T22535">
    <property type="entry name" value="T22535"/>
</dbReference>
<dbReference type="RefSeq" id="NP_502398.1">
    <property type="nucleotide sequence ID" value="NM_069997.2"/>
</dbReference>
<dbReference type="SMR" id="G5EBR8"/>
<dbReference type="FunCoup" id="G5EBR8">
    <property type="interactions" value="257"/>
</dbReference>
<dbReference type="STRING" id="6239.F53B2.3.1"/>
<dbReference type="iPTMnet" id="G5EBR8"/>
<dbReference type="PaxDb" id="6239-F53B2.3"/>
<dbReference type="EnsemblMetazoa" id="F53B2.3.1">
    <property type="protein sequence ID" value="F53B2.3.1"/>
    <property type="gene ID" value="WBGene00009955"/>
</dbReference>
<dbReference type="GeneID" id="186150"/>
<dbReference type="KEGG" id="cel:CELE_F53B2.3"/>
<dbReference type="AGR" id="WB:WBGene00009955"/>
<dbReference type="CTD" id="186150"/>
<dbReference type="WormBase" id="F53B2.3">
    <property type="protein sequence ID" value="CE05917"/>
    <property type="gene ID" value="WBGene00009955"/>
    <property type="gene designation" value="eak-4"/>
</dbReference>
<dbReference type="HOGENOM" id="CLU_1125402_0_0_1"/>
<dbReference type="InParanoid" id="G5EBR8"/>
<dbReference type="PhylomeDB" id="G5EBR8"/>
<dbReference type="PRO" id="PR:G5EBR8"/>
<dbReference type="Proteomes" id="UP000001940">
    <property type="component" value="Chromosome IV"/>
</dbReference>
<dbReference type="Bgee" id="WBGene00009955">
    <property type="expression patterns" value="Expressed in larva"/>
</dbReference>
<dbReference type="GO" id="GO:0005886">
    <property type="term" value="C:plasma membrane"/>
    <property type="evidence" value="ECO:0000314"/>
    <property type="project" value="WormBase"/>
</dbReference>
<dbReference type="GO" id="GO:0040024">
    <property type="term" value="P:dauer larval development"/>
    <property type="evidence" value="ECO:0000315"/>
    <property type="project" value="WormBase"/>
</dbReference>
<protein>
    <recommendedName>
        <fullName evidence="3">Protein eak-4</fullName>
    </recommendedName>
    <alternativeName>
        <fullName evidence="7">Enhancer of akt-1 null 4</fullName>
    </alternativeName>
</protein>
<sequence>MGQCLAVHRRIMASQEFPNIPQPESQCHDAFIRYSPGRYERRAARSQVDYYLLPQAPRLMTEDLDKKEFQRLYDARCELVECPAGRRAMQLDVQIYADRYEATLNKILETSQELDKGLEDIFQAYTKDDPLADKVMNCRLTVDEMGRVYEHFFRESAWNLDSFVEYRKNLARDAYLLLADLKIAIQRLGMHFNPNFEDAQVKVDFQIMQAEQIIFHFKRTYRDALKHNPDSITEFVEDELEDPGTPL</sequence>
<reference evidence="5" key="1">
    <citation type="journal article" date="2006" name="PLoS Genet.">
        <title>Two membrane-associated tyrosine phosphatase homologs potentiate C. elegans AKT-1/PKB signaling.</title>
        <authorList>
            <person name="Hu P.J."/>
            <person name="Xu J."/>
            <person name="Ruvkun G."/>
        </authorList>
    </citation>
    <scope>NUCLEOTIDE SEQUENCE [MRNA]</scope>
    <scope>FUNCTION</scope>
    <scope>SUBCELLULAR LOCATION</scope>
    <scope>TISSUE SPECIFICITY</scope>
    <scope>MUTAGENESIS OF GLY-2; GLY-85 AND TYR-96</scope>
    <scope>MYRISTOYLATION AT GLY-2</scope>
</reference>
<reference evidence="6" key="2">
    <citation type="journal article" date="1998" name="Science">
        <title>Genome sequence of the nematode C. elegans: a platform for investigating biology.</title>
        <authorList>
            <consortium name="The C. elegans sequencing consortium"/>
        </authorList>
    </citation>
    <scope>NUCLEOTIDE SEQUENCE [LARGE SCALE GENOMIC DNA]</scope>
    <source>
        <strain evidence="6">Bristol N2</strain>
    </source>
</reference>
<reference key="3">
    <citation type="journal article" date="2013" name="PLoS Genet.">
        <title>TATN-1 mutations reveal a novel role for tyrosine as a metabolic signal that influences developmental decisions and longevity in Caenorhabditis elegans.</title>
        <authorList>
            <person name="Ferguson A.A."/>
            <person name="Roy S."/>
            <person name="Kormanik K.N."/>
            <person name="Kim Y."/>
            <person name="Dumas K.J."/>
            <person name="Ritov V.B."/>
            <person name="Matern D."/>
            <person name="Hu P.J."/>
            <person name="Fisher A.L."/>
        </authorList>
    </citation>
    <scope>FUNCTION</scope>
    <scope>MUTAGENESIS OF GLY-85</scope>
</reference>
<organism evidence="6">
    <name type="scientific">Caenorhabditis elegans</name>
    <dbReference type="NCBI Taxonomy" id="6239"/>
    <lineage>
        <taxon>Eukaryota</taxon>
        <taxon>Metazoa</taxon>
        <taxon>Ecdysozoa</taxon>
        <taxon>Nematoda</taxon>
        <taxon>Chromadorea</taxon>
        <taxon>Rhabditida</taxon>
        <taxon>Rhabditina</taxon>
        <taxon>Rhabditomorpha</taxon>
        <taxon>Rhabditoidea</taxon>
        <taxon>Rhabditidae</taxon>
        <taxon>Peloderinae</taxon>
        <taxon>Caenorhabditis</taxon>
    </lineage>
</organism>
<keyword id="KW-1003">Cell membrane</keyword>
<keyword id="KW-0449">Lipoprotein</keyword>
<keyword id="KW-0472">Membrane</keyword>
<keyword id="KW-0519">Myristate</keyword>
<keyword id="KW-1185">Reference proteome</keyword>
<accession>G5EBR8</accession>
<gene>
    <name evidence="7" type="primary">eak-4</name>
    <name evidence="7" type="ORF">F53B2.3</name>
</gene>
<comment type="function">
    <text evidence="1 2">Together with eak-6 and sdf-9, negatively regulates dauer larva formation downstream of the insulin-like receptor daf-2 and in parallel with age-1, pdk-1 and akt-1 (PubMed:16839187).</text>
</comment>
<comment type="subcellular location">
    <subcellularLocation>
        <location evidence="1">Cell membrane</location>
        <topology evidence="4">Lipid-anchor</topology>
        <orientation evidence="1">Cytoplasmic side</orientation>
    </subcellularLocation>
</comment>
<comment type="tissue specificity">
    <text evidence="1">Expressed in the 2 embryonic head hypodermal cells XXXL/R.</text>
</comment>
<proteinExistence type="evidence at protein level"/>
<feature type="initiator methionine" description="Removed" evidence="4">
    <location>
        <position position="1"/>
    </location>
</feature>
<feature type="chain" id="PRO_0000436046" description="Protein eak-4" evidence="3">
    <location>
        <begin position="2"/>
        <end position="247"/>
    </location>
</feature>
<feature type="lipid moiety-binding region" description="N-myristoyl glycine" evidence="4">
    <location>
        <position position="2"/>
    </location>
</feature>
<feature type="mutagenesis site" description="Probable loss of myristoylation. Loss of membrane localization." evidence="1">
    <original>G</original>
    <variation>A</variation>
    <location>
        <position position="2"/>
    </location>
</feature>
<feature type="mutagenesis site" description="In mg348; wild-type lifespan. Moderate increase in constitutive dauer larva formation at 27 degrees Celsius. Significant increase in dauer larva formation in response to the AMP analog AICAR (5-amino-1-(5-phospho-beta-D-ribosyl)imidazole-4-carboxamide) at 25 degrees Celsius. This phenotype is abrogated in an aak-2 gt33 mutant background. Increases dauer formation in a hpd-1 ok1955 mutant background. Increases dauer formation and increases aak-2 phosphorylation, but does not impair energy production in a tatn-1 RNAi mutant background. Reduces dauer formation in a tatn-1 RNAi or tatn-1 qd182 and aak-2 gt33 mutant background." evidence="1 2">
    <original>G</original>
    <variation>E</variation>
    <location>
        <position position="85"/>
    </location>
</feature>
<feature type="mutagenesis site" description="In mg326; increases constitutive dauer larva formation at 25 degrees Celsius in akt-1 mg306 mutant background." evidence="1">
    <original>Y</original>
    <variation>N</variation>
    <location>
        <position position="96"/>
    </location>
</feature>
<name>EAK4_CAEEL</name>